<proteinExistence type="evidence at protein level"/>
<protein>
    <recommendedName>
        <fullName>Heat shock protein homolog SSE1</fullName>
    </recommendedName>
    <alternativeName>
        <fullName>Chaperone protein MSI3</fullName>
    </alternativeName>
</protein>
<feature type="initiator methionine" description="Removed" evidence="4">
    <location>
        <position position="1"/>
    </location>
</feature>
<feature type="chain" id="PRO_0000078396" description="Heat shock protein homolog SSE1">
    <location>
        <begin position="2"/>
        <end position="693"/>
    </location>
</feature>
<feature type="region of interest" description="Disordered" evidence="1">
    <location>
        <begin position="653"/>
        <end position="693"/>
    </location>
</feature>
<feature type="compositionally biased region" description="Basic and acidic residues" evidence="1">
    <location>
        <begin position="673"/>
        <end position="687"/>
    </location>
</feature>
<feature type="modified residue" description="N-acetylserine" evidence="4">
    <location>
        <position position="2"/>
    </location>
</feature>
<feature type="modified residue" description="Phosphothreonine" evidence="6">
    <location>
        <position position="242"/>
    </location>
</feature>
<feature type="modified residue" description="Phosphoserine" evidence="7">
    <location>
        <position position="660"/>
    </location>
</feature>
<feature type="cross-link" description="Glycyl lysine isopeptide (Lys-Gly) (interchain with G-Cter in ubiquitin)" evidence="8">
    <location>
        <position position="195"/>
    </location>
</feature>
<feature type="sequence conflict" description="In Ref. 1; BAA02576/BAA07449." evidence="5" ref="1">
    <original>TA</original>
    <variation>NT</variation>
    <location>
        <begin position="269"/>
        <end position="270"/>
    </location>
</feature>
<feature type="strand" evidence="11">
    <location>
        <begin position="5"/>
        <end position="8"/>
    </location>
</feature>
<feature type="strand" evidence="11">
    <location>
        <begin position="11"/>
        <end position="20"/>
    </location>
</feature>
<feature type="strand" evidence="11">
    <location>
        <begin position="23"/>
        <end position="27"/>
    </location>
</feature>
<feature type="strand" evidence="11">
    <location>
        <begin position="34"/>
        <end position="37"/>
    </location>
</feature>
<feature type="strand" evidence="11">
    <location>
        <begin position="40"/>
        <end position="42"/>
    </location>
</feature>
<feature type="strand" evidence="11">
    <location>
        <begin position="44"/>
        <end position="49"/>
    </location>
</feature>
<feature type="helix" evidence="11">
    <location>
        <begin position="51"/>
        <end position="57"/>
    </location>
</feature>
<feature type="helix" evidence="11">
    <location>
        <begin position="61"/>
        <end position="63"/>
    </location>
</feature>
<feature type="helix" evidence="11">
    <location>
        <begin position="68"/>
        <end position="71"/>
    </location>
</feature>
<feature type="helix" evidence="11">
    <location>
        <begin position="81"/>
        <end position="85"/>
    </location>
</feature>
<feature type="strand" evidence="11">
    <location>
        <begin position="90"/>
        <end position="94"/>
    </location>
</feature>
<feature type="strand" evidence="11">
    <location>
        <begin position="98"/>
        <end position="106"/>
    </location>
</feature>
<feature type="strand" evidence="11">
    <location>
        <begin position="109"/>
        <end position="114"/>
    </location>
</feature>
<feature type="helix" evidence="11">
    <location>
        <begin position="115"/>
        <end position="134"/>
    </location>
</feature>
<feature type="strand" evidence="11">
    <location>
        <begin position="140"/>
        <end position="145"/>
    </location>
</feature>
<feature type="helix" evidence="11">
    <location>
        <begin position="151"/>
        <end position="163"/>
    </location>
</feature>
<feature type="strand" evidence="11">
    <location>
        <begin position="167"/>
        <end position="173"/>
    </location>
</feature>
<feature type="helix" evidence="11">
    <location>
        <begin position="174"/>
        <end position="185"/>
    </location>
</feature>
<feature type="strand" evidence="11">
    <location>
        <begin position="192"/>
        <end position="194"/>
    </location>
</feature>
<feature type="strand" evidence="11">
    <location>
        <begin position="197"/>
        <end position="204"/>
    </location>
</feature>
<feature type="strand" evidence="11">
    <location>
        <begin position="209"/>
        <end position="217"/>
    </location>
</feature>
<feature type="strand" evidence="11">
    <location>
        <begin position="220"/>
        <end position="229"/>
    </location>
</feature>
<feature type="helix" evidence="11">
    <location>
        <begin position="234"/>
        <end position="252"/>
    </location>
</feature>
<feature type="helix" evidence="11">
    <location>
        <begin position="257"/>
        <end position="259"/>
    </location>
</feature>
<feature type="helix" evidence="11">
    <location>
        <begin position="261"/>
        <end position="280"/>
    </location>
</feature>
<feature type="strand" evidence="11">
    <location>
        <begin position="282"/>
        <end position="288"/>
    </location>
</feature>
<feature type="strand" evidence="11">
    <location>
        <begin position="291"/>
        <end position="294"/>
    </location>
</feature>
<feature type="strand" evidence="11">
    <location>
        <begin position="297"/>
        <end position="302"/>
    </location>
</feature>
<feature type="helix" evidence="11">
    <location>
        <begin position="303"/>
        <end position="309"/>
    </location>
</feature>
<feature type="helix" evidence="11">
    <location>
        <begin position="311"/>
        <end position="314"/>
    </location>
</feature>
<feature type="turn" evidence="11">
    <location>
        <begin position="315"/>
        <end position="318"/>
    </location>
</feature>
<feature type="helix" evidence="11">
    <location>
        <begin position="319"/>
        <end position="328"/>
    </location>
</feature>
<feature type="helix" evidence="11">
    <location>
        <begin position="332"/>
        <end position="334"/>
    </location>
</feature>
<feature type="strand" evidence="11">
    <location>
        <begin position="337"/>
        <end position="342"/>
    </location>
</feature>
<feature type="helix" evidence="11">
    <location>
        <begin position="343"/>
        <end position="346"/>
    </location>
</feature>
<feature type="helix" evidence="11">
    <location>
        <begin position="348"/>
        <end position="358"/>
    </location>
</feature>
<feature type="turn" evidence="11">
    <location>
        <begin position="368"/>
        <end position="370"/>
    </location>
</feature>
<feature type="helix" evidence="11">
    <location>
        <begin position="371"/>
        <end position="382"/>
    </location>
</feature>
<feature type="strand" evidence="9">
    <location>
        <begin position="385"/>
        <end position="387"/>
    </location>
</feature>
<feature type="strand" evidence="11">
    <location>
        <begin position="393"/>
        <end position="398"/>
    </location>
</feature>
<feature type="strand" evidence="11">
    <location>
        <begin position="402"/>
        <end position="406"/>
    </location>
</feature>
<feature type="strand" evidence="11">
    <location>
        <begin position="414"/>
        <end position="419"/>
    </location>
</feature>
<feature type="strand" evidence="11">
    <location>
        <begin position="423"/>
        <end position="437"/>
    </location>
</feature>
<feature type="strand" evidence="11">
    <location>
        <begin position="439"/>
        <end position="446"/>
    </location>
</feature>
<feature type="helix" evidence="11">
    <location>
        <begin position="448"/>
        <end position="450"/>
    </location>
</feature>
<feature type="strand" evidence="11">
    <location>
        <begin position="457"/>
        <end position="465"/>
    </location>
</feature>
<feature type="strand" evidence="11">
    <location>
        <begin position="476"/>
        <end position="484"/>
    </location>
</feature>
<feature type="strand" evidence="11">
    <location>
        <begin position="490"/>
        <end position="498"/>
    </location>
</feature>
<feature type="strand" evidence="10">
    <location>
        <begin position="505"/>
        <end position="507"/>
    </location>
</feature>
<feature type="strand" evidence="10">
    <location>
        <begin position="520"/>
        <end position="522"/>
    </location>
</feature>
<feature type="strand" evidence="11">
    <location>
        <begin position="529"/>
        <end position="532"/>
    </location>
</feature>
<feature type="strand" evidence="11">
    <location>
        <begin position="534"/>
        <end position="538"/>
    </location>
</feature>
<feature type="helix" evidence="11">
    <location>
        <begin position="544"/>
        <end position="585"/>
    </location>
</feature>
<feature type="turn" evidence="11">
    <location>
        <begin position="586"/>
        <end position="589"/>
    </location>
</feature>
<feature type="helix" evidence="11">
    <location>
        <begin position="590"/>
        <end position="592"/>
    </location>
</feature>
<feature type="helix" evidence="11">
    <location>
        <begin position="595"/>
        <end position="611"/>
    </location>
</feature>
<feature type="turn" evidence="11">
    <location>
        <begin position="612"/>
        <end position="614"/>
    </location>
</feature>
<feature type="helix" evidence="11">
    <location>
        <begin position="615"/>
        <end position="618"/>
    </location>
</feature>
<feature type="helix" evidence="11">
    <location>
        <begin position="621"/>
        <end position="653"/>
    </location>
</feature>
<sequence length="693" mass="77366">MSTPFGLDLGNNNSVLAVARNRGIDIVVNEVSNRSTPSVVGFGPKNRYLGETGKNKQTSNIKNTVANLKRIIGLDYHHPDFEQESKHFTSKLVELDDKKTGAEVRFAGEKHVFSATQLAAMFIDKVKDTVKQDTKANITDVCIAVPPWYTEEQRYNIADAARIAGLNPVRIVNDVTAAGVSYGIFKTDLPEGEEKPRIVAFVDIGHSSYTCSIMAFKKGQLKVLGTACDKHFGGRDFDLAITEHFADEFKTKYKIDIRENPKAYNRILTAAEKLKKVLSANTNAPFSVESVMNDVDVSSQLSREELEELVKPLLERVTEPVTKALAQAKLSAEEVDFVEIIGGTTRIPTLKQSISEAFGKPLSTTLNQDEAIAKGAAFICAIHSPTLRVRPFKFEDIHPYSVSYSWDKQVEDEDHMEVFPAGSSFPSTKLITLNRTGDFSMAASYTDITQLPPNTPEQIANWEITGVQLPEGQDSVPVKLKLRCDPSGLHTIEEAYTIEDIEVEEPIPLPEDAPEDAEQEFKKVTKTVKKDDLTIVAHTFGLDAKKLNELIEKENEMLAQDKLVAETEDRKNTLEEYIYTLRGKLEEEYAPFASDAEKTKLQGMLNKAEEWLYDEGFDSIKAKYIAKYEELASLGNIIRGRYLAKEEEKKQAIRSKQEASQMAAMAEKLAAQRKAEAEKKEEKKDTEGDVDMD</sequence>
<reference key="1">
    <citation type="journal article" date="1993" name="Gene">
        <title>Isolation and characterization of SSE1 and SSE2, new members of the yeast HSP70 multigene family.</title>
        <authorList>
            <person name="Mukai H."/>
            <person name="Kuno T."/>
            <person name="Tanaka H."/>
            <person name="Hirata D."/>
            <person name="Miyakawa T."/>
            <person name="Tanaka C."/>
        </authorList>
    </citation>
    <scope>NUCLEOTIDE SEQUENCE [MRNA]</scope>
    <source>
        <strain>ATCC 204626 / S288c / A364A</strain>
    </source>
</reference>
<reference key="2">
    <citation type="journal article" date="1993" name="Mol. Gen. Genet.">
        <title>MSI3, a multicopy suppressor of mutants hyperactivated in the RAS-cAMP pathway, encodes a novel HSP70 protein of Saccharomyces cerevisiae.</title>
        <authorList>
            <person name="Shirayama M."/>
            <person name="Kawakami K."/>
            <person name="Matsui Y."/>
            <person name="Tanaka K."/>
            <person name="Toh-e A."/>
        </authorList>
    </citation>
    <scope>NUCLEOTIDE SEQUENCE [GENOMIC DNA]</scope>
</reference>
<reference key="3">
    <citation type="journal article" date="1997" name="Nature">
        <title>The nucleotide sequence of Saccharomyces cerevisiae chromosome XVI.</title>
        <authorList>
            <person name="Bussey H."/>
            <person name="Storms R.K."/>
            <person name="Ahmed A."/>
            <person name="Albermann K."/>
            <person name="Allen E."/>
            <person name="Ansorge W."/>
            <person name="Araujo R."/>
            <person name="Aparicio A."/>
            <person name="Barrell B.G."/>
            <person name="Badcock K."/>
            <person name="Benes V."/>
            <person name="Botstein D."/>
            <person name="Bowman S."/>
            <person name="Brueckner M."/>
            <person name="Carpenter J."/>
            <person name="Cherry J.M."/>
            <person name="Chung E."/>
            <person name="Churcher C.M."/>
            <person name="Coster F."/>
            <person name="Davis K."/>
            <person name="Davis R.W."/>
            <person name="Dietrich F.S."/>
            <person name="Delius H."/>
            <person name="DiPaolo T."/>
            <person name="Dubois E."/>
            <person name="Duesterhoeft A."/>
            <person name="Duncan M."/>
            <person name="Floeth M."/>
            <person name="Fortin N."/>
            <person name="Friesen J.D."/>
            <person name="Fritz C."/>
            <person name="Goffeau A."/>
            <person name="Hall J."/>
            <person name="Hebling U."/>
            <person name="Heumann K."/>
            <person name="Hilbert H."/>
            <person name="Hillier L.W."/>
            <person name="Hunicke-Smith S."/>
            <person name="Hyman R.W."/>
            <person name="Johnston M."/>
            <person name="Kalman S."/>
            <person name="Kleine K."/>
            <person name="Komp C."/>
            <person name="Kurdi O."/>
            <person name="Lashkari D."/>
            <person name="Lew H."/>
            <person name="Lin A."/>
            <person name="Lin D."/>
            <person name="Louis E.J."/>
            <person name="Marathe R."/>
            <person name="Messenguy F."/>
            <person name="Mewes H.-W."/>
            <person name="Mirtipati S."/>
            <person name="Moestl D."/>
            <person name="Mueller-Auer S."/>
            <person name="Namath A."/>
            <person name="Nentwich U."/>
            <person name="Oefner P."/>
            <person name="Pearson D."/>
            <person name="Petel F.X."/>
            <person name="Pohl T.M."/>
            <person name="Purnelle B."/>
            <person name="Rajandream M.A."/>
            <person name="Rechmann S."/>
            <person name="Rieger M."/>
            <person name="Riles L."/>
            <person name="Roberts D."/>
            <person name="Schaefer M."/>
            <person name="Scharfe M."/>
            <person name="Scherens B."/>
            <person name="Schramm S."/>
            <person name="Schroeder M."/>
            <person name="Sdicu A.-M."/>
            <person name="Tettelin H."/>
            <person name="Urrestarazu L.A."/>
            <person name="Ushinsky S."/>
            <person name="Vierendeels F."/>
            <person name="Vissers S."/>
            <person name="Voss H."/>
            <person name="Walsh S.V."/>
            <person name="Wambutt R."/>
            <person name="Wang Y."/>
            <person name="Wedler E."/>
            <person name="Wedler H."/>
            <person name="Winnett E."/>
            <person name="Zhong W.-W."/>
            <person name="Zollner A."/>
            <person name="Vo D.H."/>
            <person name="Hani J."/>
        </authorList>
    </citation>
    <scope>NUCLEOTIDE SEQUENCE [LARGE SCALE GENOMIC DNA]</scope>
    <source>
        <strain>ATCC 204508 / S288c</strain>
    </source>
</reference>
<reference key="4">
    <citation type="journal article" date="2014" name="G3 (Bethesda)">
        <title>The reference genome sequence of Saccharomyces cerevisiae: Then and now.</title>
        <authorList>
            <person name="Engel S.R."/>
            <person name="Dietrich F.S."/>
            <person name="Fisk D.G."/>
            <person name="Binkley G."/>
            <person name="Balakrishnan R."/>
            <person name="Costanzo M.C."/>
            <person name="Dwight S.S."/>
            <person name="Hitz B.C."/>
            <person name="Karra K."/>
            <person name="Nash R.S."/>
            <person name="Weng S."/>
            <person name="Wong E.D."/>
            <person name="Lloyd P."/>
            <person name="Skrzypek M.S."/>
            <person name="Miyasato S.R."/>
            <person name="Simison M."/>
            <person name="Cherry J.M."/>
        </authorList>
    </citation>
    <scope>GENOME REANNOTATION</scope>
    <source>
        <strain>ATCC 204508 / S288c</strain>
    </source>
</reference>
<reference key="5">
    <citation type="journal article" date="1994" name="Electrophoresis">
        <title>Protein identifications for a Saccharomyces cerevisiae protein database.</title>
        <authorList>
            <person name="Garrels J.I."/>
            <person name="Futcher B."/>
            <person name="Kobayashi R."/>
            <person name="Latter G.I."/>
            <person name="Schwender B."/>
            <person name="Volpe T."/>
            <person name="Warner J.R."/>
            <person name="McLaughlin C.S."/>
        </authorList>
    </citation>
    <scope>PROTEIN SEQUENCE OF 100-110</scope>
    <source>
        <strain>ATCC 204508 / S288c</strain>
    </source>
</reference>
<reference key="6">
    <citation type="journal article" date="1996" name="FEMS Microbiol. Lett.">
        <title>Protein expression during exponential growth in 0.7 M NaCl medium of Saccharomyces cerevisiae.</title>
        <authorList>
            <person name="Norbeck J."/>
            <person name="Blomberg A."/>
        </authorList>
    </citation>
    <scope>PROTEIN SEQUENCE OF 330-339</scope>
    <source>
        <strain>ATCC 38531 / Y41</strain>
    </source>
</reference>
<reference key="7">
    <citation type="journal article" date="1997" name="Electrophoresis">
        <title>Proteome studies of Saccharomyces cerevisiae: identification and characterization of abundant proteins.</title>
        <authorList>
            <person name="Garrels J.I."/>
            <person name="McLaughlin C.S."/>
            <person name="Warner J.R."/>
            <person name="Futcher B."/>
            <person name="Latter G.I."/>
            <person name="Kobayashi R."/>
            <person name="Schwender B."/>
            <person name="Volpe T."/>
            <person name="Anderson D.S."/>
            <person name="Mesquita-Fuentes R."/>
            <person name="Payne W.E."/>
        </authorList>
    </citation>
    <scope>ACETYLATION AT SER-2</scope>
</reference>
<reference key="8">
    <citation type="journal article" date="2003" name="Nature">
        <title>Global analysis of protein localization in budding yeast.</title>
        <authorList>
            <person name="Huh W.-K."/>
            <person name="Falvo J.V."/>
            <person name="Gerke L.C."/>
            <person name="Carroll A.S."/>
            <person name="Howson R.W."/>
            <person name="Weissman J.S."/>
            <person name="O'Shea E.K."/>
        </authorList>
    </citation>
    <scope>SUBCELLULAR LOCATION [LARGE SCALE ANALYSIS]</scope>
</reference>
<reference key="9">
    <citation type="journal article" date="2003" name="Nature">
        <title>Global analysis of protein expression in yeast.</title>
        <authorList>
            <person name="Ghaemmaghami S."/>
            <person name="Huh W.-K."/>
            <person name="Bower K."/>
            <person name="Howson R.W."/>
            <person name="Belle A."/>
            <person name="Dephoure N."/>
            <person name="O'Shea E.K."/>
            <person name="Weissman J.S."/>
        </authorList>
    </citation>
    <scope>LEVEL OF PROTEIN EXPRESSION [LARGE SCALE ANALYSIS]</scope>
</reference>
<reference key="10">
    <citation type="journal article" date="2007" name="Proc. Natl. Acad. Sci. U.S.A.">
        <title>Analysis of phosphorylation sites on proteins from Saccharomyces cerevisiae by electron transfer dissociation (ETD) mass spectrometry.</title>
        <authorList>
            <person name="Chi A."/>
            <person name="Huttenhower C."/>
            <person name="Geer L.Y."/>
            <person name="Coon J.J."/>
            <person name="Syka J.E.P."/>
            <person name="Bai D.L."/>
            <person name="Shabanowitz J."/>
            <person name="Burke D.J."/>
            <person name="Troyanskaya O.G."/>
            <person name="Hunt D.F."/>
        </authorList>
    </citation>
    <scope>PHOSPHORYLATION [LARGE SCALE ANALYSIS] AT THR-242</scope>
    <scope>IDENTIFICATION BY MASS SPECTROMETRY [LARGE SCALE ANALYSIS]</scope>
</reference>
<reference key="11">
    <citation type="journal article" date="2008" name="Mol. Cell. Proteomics">
        <title>A multidimensional chromatography technology for in-depth phosphoproteome analysis.</title>
        <authorList>
            <person name="Albuquerque C.P."/>
            <person name="Smolka M.B."/>
            <person name="Payne S.H."/>
            <person name="Bafna V."/>
            <person name="Eng J."/>
            <person name="Zhou H."/>
        </authorList>
    </citation>
    <scope>PHOSPHORYLATION [LARGE SCALE ANALYSIS] AT SER-660</scope>
    <scope>IDENTIFICATION BY MASS SPECTROMETRY [LARGE SCALE ANALYSIS]</scope>
</reference>
<reference key="12">
    <citation type="journal article" date="2012" name="Proteomics">
        <title>Sites of ubiquitin attachment in Saccharomyces cerevisiae.</title>
        <authorList>
            <person name="Starita L.M."/>
            <person name="Lo R.S."/>
            <person name="Eng J.K."/>
            <person name="von Haller P.D."/>
            <person name="Fields S."/>
        </authorList>
    </citation>
    <scope>UBIQUITINATION [LARGE SCALE ANALYSIS] AT LYS-195</scope>
    <scope>IDENTIFICATION BY MASS SPECTROMETRY [LARGE SCALE ANALYSIS]</scope>
</reference>
<accession>P32589</accession>
<accession>D6W3R1</accession>
<gene>
    <name type="primary">SSE1</name>
    <name type="synonym">MSI3</name>
    <name type="ordered locus">YPL106C</name>
    <name type="ORF">LPG3C</name>
</gene>
<evidence type="ECO:0000256" key="1">
    <source>
        <dbReference type="SAM" id="MobiDB-lite"/>
    </source>
</evidence>
<evidence type="ECO:0000269" key="2">
    <source>
    </source>
</evidence>
<evidence type="ECO:0000269" key="3">
    <source>
    </source>
</evidence>
<evidence type="ECO:0000269" key="4">
    <source>
    </source>
</evidence>
<evidence type="ECO:0000305" key="5"/>
<evidence type="ECO:0007744" key="6">
    <source>
    </source>
</evidence>
<evidence type="ECO:0007744" key="7">
    <source>
    </source>
</evidence>
<evidence type="ECO:0007744" key="8">
    <source>
    </source>
</evidence>
<evidence type="ECO:0007829" key="9">
    <source>
        <dbReference type="PDB" id="2QXL"/>
    </source>
</evidence>
<evidence type="ECO:0007829" key="10">
    <source>
        <dbReference type="PDB" id="3C7N"/>
    </source>
</evidence>
<evidence type="ECO:0007829" key="11">
    <source>
        <dbReference type="PDB" id="3D2F"/>
    </source>
</evidence>
<organism>
    <name type="scientific">Saccharomyces cerevisiae (strain ATCC 204508 / S288c)</name>
    <name type="common">Baker's yeast</name>
    <dbReference type="NCBI Taxonomy" id="559292"/>
    <lineage>
        <taxon>Eukaryota</taxon>
        <taxon>Fungi</taxon>
        <taxon>Dikarya</taxon>
        <taxon>Ascomycota</taxon>
        <taxon>Saccharomycotina</taxon>
        <taxon>Saccharomycetes</taxon>
        <taxon>Saccharomycetales</taxon>
        <taxon>Saccharomycetaceae</taxon>
        <taxon>Saccharomyces</taxon>
    </lineage>
</organism>
<comment type="function">
    <text>Has a calcium-dependent calmodulin-binding activity. Required for normal growth at various temperatures.</text>
</comment>
<comment type="interaction">
    <interactant intactId="EBI-8648">
        <id>P32589</id>
    </interactant>
    <interactant intactId="EBI-8659">
        <id>P02829</id>
        <label>HSP82</label>
    </interactant>
    <organismsDiffer>false</organismsDiffer>
    <experiments>3</experiments>
</comment>
<comment type="interaction">
    <interactant intactId="EBI-8648">
        <id>P32589</id>
    </interactant>
    <interactant intactId="EBI-17244">
        <id>P25294</id>
        <label>SIS1</label>
    </interactant>
    <organismsDiffer>false</organismsDiffer>
    <experiments>3</experiments>
</comment>
<comment type="interaction">
    <interactant intactId="EBI-8648">
        <id>P32589</id>
    </interactant>
    <interactant intactId="EBI-8591">
        <id>P10591</id>
        <label>SSA1</label>
    </interactant>
    <organismsDiffer>false</organismsDiffer>
    <experiments>8</experiments>
</comment>
<comment type="interaction">
    <interactant intactId="EBI-8648">
        <id>P32589</id>
    </interactant>
    <interactant intactId="EBI-8627">
        <id>P11484</id>
        <label>SSB1</label>
    </interactant>
    <organismsDiffer>false</organismsDiffer>
    <experiments>3</experiments>
</comment>
<comment type="interaction">
    <interactant intactId="EBI-8648">
        <id>P32589</id>
    </interactant>
    <interactant intactId="EBI-629985">
        <id>P08107</id>
        <label>HSPA1B</label>
    </interactant>
    <organismsDiffer>true</organismsDiffer>
    <experiments>2</experiments>
</comment>
<comment type="subcellular location">
    <subcellularLocation>
        <location evidence="2">Cytoplasm</location>
    </subcellularLocation>
</comment>
<comment type="induction">
    <text>Increases a few-fold upon upshift to 37 degrees Celsius.</text>
</comment>
<comment type="miscellaneous">
    <text evidence="3">Present with 71700 molecules/cell in log phase SD medium.</text>
</comment>
<comment type="similarity">
    <text evidence="5">Belongs to the heat shock protein 70 family.</text>
</comment>
<keyword id="KW-0002">3D-structure</keyword>
<keyword id="KW-0007">Acetylation</keyword>
<keyword id="KW-0067">ATP-binding</keyword>
<keyword id="KW-0112">Calmodulin-binding</keyword>
<keyword id="KW-0143">Chaperone</keyword>
<keyword id="KW-0963">Cytoplasm</keyword>
<keyword id="KW-0903">Direct protein sequencing</keyword>
<keyword id="KW-1017">Isopeptide bond</keyword>
<keyword id="KW-0547">Nucleotide-binding</keyword>
<keyword id="KW-0597">Phosphoprotein</keyword>
<keyword id="KW-1185">Reference proteome</keyword>
<keyword id="KW-0346">Stress response</keyword>
<keyword id="KW-0832">Ubl conjugation</keyword>
<dbReference type="EMBL" id="D13319">
    <property type="protein sequence ID" value="BAA02576.1"/>
    <property type="molecule type" value="mRNA"/>
</dbReference>
<dbReference type="EMBL" id="D38368">
    <property type="protein sequence ID" value="BAA07449.1"/>
    <property type="molecule type" value="mRNA"/>
</dbReference>
<dbReference type="EMBL" id="D38370">
    <property type="protein sequence ID" value="BAA07451.1"/>
    <property type="molecule type" value="Genomic_DNA"/>
</dbReference>
<dbReference type="EMBL" id="D13743">
    <property type="protein sequence ID" value="BAA02888.1"/>
    <property type="molecule type" value="Genomic_DNA"/>
</dbReference>
<dbReference type="EMBL" id="U43281">
    <property type="protein sequence ID" value="AAB68194.1"/>
    <property type="molecule type" value="Genomic_DNA"/>
</dbReference>
<dbReference type="EMBL" id="BK006949">
    <property type="protein sequence ID" value="DAA11327.1"/>
    <property type="molecule type" value="Genomic_DNA"/>
</dbReference>
<dbReference type="PIR" id="S46417">
    <property type="entry name" value="S46417"/>
</dbReference>
<dbReference type="RefSeq" id="NP_015219.1">
    <property type="nucleotide sequence ID" value="NM_001183920.1"/>
</dbReference>
<dbReference type="PDB" id="2QXL">
    <property type="method" value="X-ray"/>
    <property type="resolution" value="2.41 A"/>
    <property type="chains" value="A/B=2-659"/>
</dbReference>
<dbReference type="PDB" id="3C7N">
    <property type="method" value="X-ray"/>
    <property type="resolution" value="3.12 A"/>
    <property type="chains" value="A=1-666"/>
</dbReference>
<dbReference type="PDB" id="3D2E">
    <property type="method" value="X-ray"/>
    <property type="resolution" value="2.35 A"/>
    <property type="chains" value="A/C=1-502, A/C=525-693"/>
</dbReference>
<dbReference type="PDB" id="3D2F">
    <property type="method" value="X-ray"/>
    <property type="resolution" value="2.30 A"/>
    <property type="chains" value="A/C=1-502, A/C=525-693"/>
</dbReference>
<dbReference type="PDBsum" id="2QXL"/>
<dbReference type="PDBsum" id="3C7N"/>
<dbReference type="PDBsum" id="3D2E"/>
<dbReference type="PDBsum" id="3D2F"/>
<dbReference type="SMR" id="P32589"/>
<dbReference type="BioGRID" id="36075">
    <property type="interactions" value="712"/>
</dbReference>
<dbReference type="DIP" id="DIP-6645N"/>
<dbReference type="FunCoup" id="P32589">
    <property type="interactions" value="1566"/>
</dbReference>
<dbReference type="IntAct" id="P32589">
    <property type="interactions" value="146"/>
</dbReference>
<dbReference type="MINT" id="P32589"/>
<dbReference type="STRING" id="4932.YPL106C"/>
<dbReference type="CarbonylDB" id="P32589"/>
<dbReference type="iPTMnet" id="P32589"/>
<dbReference type="PaxDb" id="4932-YPL106C"/>
<dbReference type="PeptideAtlas" id="P32589"/>
<dbReference type="EnsemblFungi" id="YPL106C_mRNA">
    <property type="protein sequence ID" value="YPL106C"/>
    <property type="gene ID" value="YPL106C"/>
</dbReference>
<dbReference type="GeneID" id="855998"/>
<dbReference type="KEGG" id="sce:YPL106C"/>
<dbReference type="AGR" id="SGD:S000006027"/>
<dbReference type="SGD" id="S000006027">
    <property type="gene designation" value="SSE1"/>
</dbReference>
<dbReference type="VEuPathDB" id="FungiDB:YPL106C"/>
<dbReference type="eggNOG" id="KOG0103">
    <property type="taxonomic scope" value="Eukaryota"/>
</dbReference>
<dbReference type="GeneTree" id="ENSGT00940000168707"/>
<dbReference type="HOGENOM" id="CLU_005965_5_1_1"/>
<dbReference type="InParanoid" id="P32589"/>
<dbReference type="OMA" id="WEQSPEI"/>
<dbReference type="OrthoDB" id="434160at2759"/>
<dbReference type="BioCyc" id="YEAST:G3O-34008-MONOMER"/>
<dbReference type="Reactome" id="R-SCE-3371453">
    <property type="pathway name" value="Regulation of HSF1-mediated heat shock response"/>
</dbReference>
<dbReference type="BioGRID-ORCS" id="855998">
    <property type="hits" value="2 hits in 10 CRISPR screens"/>
</dbReference>
<dbReference type="CD-CODE" id="E03F929F">
    <property type="entry name" value="Stress granule"/>
</dbReference>
<dbReference type="EvolutionaryTrace" id="P32589"/>
<dbReference type="PRO" id="PR:P32589"/>
<dbReference type="Proteomes" id="UP000002311">
    <property type="component" value="Chromosome XVI"/>
</dbReference>
<dbReference type="RNAct" id="P32589">
    <property type="molecule type" value="protein"/>
</dbReference>
<dbReference type="GO" id="GO:0005737">
    <property type="term" value="C:cytoplasm"/>
    <property type="evidence" value="ECO:0007005"/>
    <property type="project" value="SGD"/>
</dbReference>
<dbReference type="GO" id="GO:0005829">
    <property type="term" value="C:cytosol"/>
    <property type="evidence" value="ECO:0000318"/>
    <property type="project" value="GO_Central"/>
</dbReference>
<dbReference type="GO" id="GO:0005634">
    <property type="term" value="C:nucleus"/>
    <property type="evidence" value="ECO:0000318"/>
    <property type="project" value="GO_Central"/>
</dbReference>
<dbReference type="GO" id="GO:0000774">
    <property type="term" value="F:adenyl-nucleotide exchange factor activity"/>
    <property type="evidence" value="ECO:0000314"/>
    <property type="project" value="SGD"/>
</dbReference>
<dbReference type="GO" id="GO:0005524">
    <property type="term" value="F:ATP binding"/>
    <property type="evidence" value="ECO:0000314"/>
    <property type="project" value="SGD"/>
</dbReference>
<dbReference type="GO" id="GO:0140662">
    <property type="term" value="F:ATP-dependent protein folding chaperone"/>
    <property type="evidence" value="ECO:0007669"/>
    <property type="project" value="InterPro"/>
</dbReference>
<dbReference type="GO" id="GO:0005516">
    <property type="term" value="F:calmodulin binding"/>
    <property type="evidence" value="ECO:0007669"/>
    <property type="project" value="UniProtKB-KW"/>
</dbReference>
<dbReference type="GO" id="GO:0042277">
    <property type="term" value="F:peptide binding"/>
    <property type="evidence" value="ECO:0000314"/>
    <property type="project" value="SGD"/>
</dbReference>
<dbReference type="GO" id="GO:0006914">
    <property type="term" value="P:autophagy"/>
    <property type="evidence" value="ECO:0000315"/>
    <property type="project" value="SGD"/>
</dbReference>
<dbReference type="GO" id="GO:0010499">
    <property type="term" value="P:proteasomal ubiquitin-independent protein catabolic process"/>
    <property type="evidence" value="ECO:0000316"/>
    <property type="project" value="SGD"/>
</dbReference>
<dbReference type="GO" id="GO:0043161">
    <property type="term" value="P:proteasome-mediated ubiquitin-dependent protein catabolic process"/>
    <property type="evidence" value="ECO:0000316"/>
    <property type="project" value="SGD"/>
</dbReference>
<dbReference type="GO" id="GO:0006457">
    <property type="term" value="P:protein folding"/>
    <property type="evidence" value="ECO:0000315"/>
    <property type="project" value="SGD"/>
</dbReference>
<dbReference type="GO" id="GO:0042026">
    <property type="term" value="P:protein refolding"/>
    <property type="evidence" value="ECO:0000314"/>
    <property type="project" value="SGD"/>
</dbReference>
<dbReference type="CDD" id="cd24094">
    <property type="entry name" value="ASKHA_NBD_HSP70_ScSse"/>
    <property type="match status" value="1"/>
</dbReference>
<dbReference type="FunFam" id="1.20.1270.10:FF:000002">
    <property type="entry name" value="Heat shock 70 kDa protein 4"/>
    <property type="match status" value="1"/>
</dbReference>
<dbReference type="FunFam" id="3.30.30.30:FF:000002">
    <property type="entry name" value="Heat shock 70 kDa protein 4"/>
    <property type="match status" value="1"/>
</dbReference>
<dbReference type="FunFam" id="3.30.420.40:FF:000171">
    <property type="entry name" value="Heat shock 70 kDa protein 4"/>
    <property type="match status" value="2"/>
</dbReference>
<dbReference type="FunFam" id="3.90.640.10:FF:000004">
    <property type="entry name" value="Heat shock 70 kDa protein 4"/>
    <property type="match status" value="1"/>
</dbReference>
<dbReference type="FunFam" id="2.60.34.10:FF:000020">
    <property type="entry name" value="Heat shock SSE1"/>
    <property type="match status" value="1"/>
</dbReference>
<dbReference type="Gene3D" id="1.20.1270.10">
    <property type="match status" value="1"/>
</dbReference>
<dbReference type="Gene3D" id="3.30.30.30">
    <property type="match status" value="1"/>
</dbReference>
<dbReference type="Gene3D" id="3.30.420.40">
    <property type="match status" value="2"/>
</dbReference>
<dbReference type="Gene3D" id="3.90.640.10">
    <property type="entry name" value="Actin, Chain A, domain 4"/>
    <property type="match status" value="1"/>
</dbReference>
<dbReference type="Gene3D" id="2.60.34.10">
    <property type="entry name" value="Substrate Binding Domain Of DNAk, Chain A, domain 1"/>
    <property type="match status" value="1"/>
</dbReference>
<dbReference type="InterPro" id="IPR043129">
    <property type="entry name" value="ATPase_NBD"/>
</dbReference>
<dbReference type="InterPro" id="IPR018181">
    <property type="entry name" value="Heat_shock_70_CS"/>
</dbReference>
<dbReference type="InterPro" id="IPR029048">
    <property type="entry name" value="HSP70_C_sf"/>
</dbReference>
<dbReference type="InterPro" id="IPR029047">
    <property type="entry name" value="HSP70_peptide-bd_sf"/>
</dbReference>
<dbReference type="InterPro" id="IPR013126">
    <property type="entry name" value="Hsp_70_fam"/>
</dbReference>
<dbReference type="PANTHER" id="PTHR45639:SF4">
    <property type="entry name" value="HSC70CB, ISOFORM G"/>
    <property type="match status" value="1"/>
</dbReference>
<dbReference type="PANTHER" id="PTHR45639">
    <property type="entry name" value="HSC70CB, ISOFORM G-RELATED"/>
    <property type="match status" value="1"/>
</dbReference>
<dbReference type="Pfam" id="PF00012">
    <property type="entry name" value="HSP70"/>
    <property type="match status" value="1"/>
</dbReference>
<dbReference type="PRINTS" id="PR00301">
    <property type="entry name" value="HEATSHOCK70"/>
</dbReference>
<dbReference type="SUPFAM" id="SSF53067">
    <property type="entry name" value="Actin-like ATPase domain"/>
    <property type="match status" value="2"/>
</dbReference>
<dbReference type="SUPFAM" id="SSF100934">
    <property type="entry name" value="Heat shock protein 70kD (HSP70), C-terminal subdomain"/>
    <property type="match status" value="1"/>
</dbReference>
<dbReference type="SUPFAM" id="SSF100920">
    <property type="entry name" value="Heat shock protein 70kD (HSP70), peptide-binding domain"/>
    <property type="match status" value="1"/>
</dbReference>
<dbReference type="PROSITE" id="PS00329">
    <property type="entry name" value="HSP70_2"/>
    <property type="match status" value="1"/>
</dbReference>
<dbReference type="PROSITE" id="PS01036">
    <property type="entry name" value="HSP70_3"/>
    <property type="match status" value="1"/>
</dbReference>
<name>HSP7F_YEAST</name>